<proteinExistence type="inferred from homology"/>
<evidence type="ECO:0000255" key="1">
    <source>
        <dbReference type="HAMAP-Rule" id="MF_00267"/>
    </source>
</evidence>
<comment type="function">
    <text evidence="1">Cell division inhibitor that blocks the formation of polar Z ring septums. Rapidly oscillates between the poles of the cell to destabilize FtsZ filaments that have formed before they mature into polar Z rings. Prevents FtsZ polymerization.</text>
</comment>
<comment type="subunit">
    <text evidence="1">Interacts with MinD and FtsZ.</text>
</comment>
<comment type="similarity">
    <text evidence="1">Belongs to the MinC family.</text>
</comment>
<gene>
    <name evidence="1" type="primary">minC</name>
    <name type="ordered locus">YPDSF_1043</name>
</gene>
<protein>
    <recommendedName>
        <fullName evidence="1">Probable septum site-determining protein MinC</fullName>
    </recommendedName>
</protein>
<sequence>MSQSPIELKGSSFTLSVVHLHDSRPEVIRQALQEKVDQAPAFLKNAPVVINVATLPNGANWKDLQQAVTSAGLRIVGISGCQDERQKRAIARAGLPLLSEGKGQKLAPEPVISPPENVPTQTRIINTPVRSGQQIYARNCDLIVISSVSAGAELIADGNIHIYGMMRGRALAGASGDAKCQIFCTHLGAELVSIAGQYWLSDQIPLEYFGQAARLYLQDNTLTIQPLN</sequence>
<reference key="1">
    <citation type="submission" date="2007-02" db="EMBL/GenBank/DDBJ databases">
        <title>Complete sequence of chromosome of Yersinia pestis Pestoides F.</title>
        <authorList>
            <consortium name="US DOE Joint Genome Institute"/>
            <person name="Copeland A."/>
            <person name="Lucas S."/>
            <person name="Lapidus A."/>
            <person name="Barry K."/>
            <person name="Detter J.C."/>
            <person name="Glavina del Rio T."/>
            <person name="Hammon N."/>
            <person name="Israni S."/>
            <person name="Dalin E."/>
            <person name="Tice H."/>
            <person name="Pitluck S."/>
            <person name="Di Bartolo G."/>
            <person name="Chain P."/>
            <person name="Malfatti S."/>
            <person name="Shin M."/>
            <person name="Vergez L."/>
            <person name="Schmutz J."/>
            <person name="Larimer F."/>
            <person name="Land M."/>
            <person name="Hauser L."/>
            <person name="Worsham P."/>
            <person name="Chu M."/>
            <person name="Bearden S."/>
            <person name="Garcia E."/>
            <person name="Richardson P."/>
        </authorList>
    </citation>
    <scope>NUCLEOTIDE SEQUENCE [LARGE SCALE GENOMIC DNA]</scope>
    <source>
        <strain>Pestoides F</strain>
    </source>
</reference>
<dbReference type="EMBL" id="CP000668">
    <property type="protein sequence ID" value="ABP39443.1"/>
    <property type="molecule type" value="Genomic_DNA"/>
</dbReference>
<dbReference type="RefSeq" id="WP_002220631.1">
    <property type="nucleotide sequence ID" value="NZ_CP009715.1"/>
</dbReference>
<dbReference type="SMR" id="A4TJI1"/>
<dbReference type="GeneID" id="96665552"/>
<dbReference type="KEGG" id="ypp:YPDSF_1043"/>
<dbReference type="PATRIC" id="fig|386656.14.peg.2791"/>
<dbReference type="GO" id="GO:0000902">
    <property type="term" value="P:cell morphogenesis"/>
    <property type="evidence" value="ECO:0007669"/>
    <property type="project" value="InterPro"/>
</dbReference>
<dbReference type="GO" id="GO:0000917">
    <property type="term" value="P:division septum assembly"/>
    <property type="evidence" value="ECO:0007669"/>
    <property type="project" value="UniProtKB-KW"/>
</dbReference>
<dbReference type="GO" id="GO:0051302">
    <property type="term" value="P:regulation of cell division"/>
    <property type="evidence" value="ECO:0007669"/>
    <property type="project" value="InterPro"/>
</dbReference>
<dbReference type="GO" id="GO:1901891">
    <property type="term" value="P:regulation of cell septum assembly"/>
    <property type="evidence" value="ECO:0007669"/>
    <property type="project" value="InterPro"/>
</dbReference>
<dbReference type="FunFam" id="2.160.20.70:FF:000002">
    <property type="entry name" value="Probable septum site-determining protein MinC"/>
    <property type="match status" value="1"/>
</dbReference>
<dbReference type="Gene3D" id="2.160.20.70">
    <property type="match status" value="1"/>
</dbReference>
<dbReference type="Gene3D" id="3.30.70.260">
    <property type="match status" value="1"/>
</dbReference>
<dbReference type="HAMAP" id="MF_00267">
    <property type="entry name" value="MinC"/>
    <property type="match status" value="1"/>
</dbReference>
<dbReference type="InterPro" id="IPR016098">
    <property type="entry name" value="CAP/MinC_C"/>
</dbReference>
<dbReference type="InterPro" id="IPR013033">
    <property type="entry name" value="MinC"/>
</dbReference>
<dbReference type="InterPro" id="IPR036145">
    <property type="entry name" value="MinC_C_sf"/>
</dbReference>
<dbReference type="InterPro" id="IPR007874">
    <property type="entry name" value="MinC_N"/>
</dbReference>
<dbReference type="InterPro" id="IPR005526">
    <property type="entry name" value="Septum_form_inhib_MinC_C"/>
</dbReference>
<dbReference type="NCBIfam" id="TIGR01222">
    <property type="entry name" value="minC"/>
    <property type="match status" value="1"/>
</dbReference>
<dbReference type="PANTHER" id="PTHR34108">
    <property type="entry name" value="SEPTUM SITE-DETERMINING PROTEIN MINC"/>
    <property type="match status" value="1"/>
</dbReference>
<dbReference type="PANTHER" id="PTHR34108:SF1">
    <property type="entry name" value="SEPTUM SITE-DETERMINING PROTEIN MINC"/>
    <property type="match status" value="1"/>
</dbReference>
<dbReference type="Pfam" id="PF03775">
    <property type="entry name" value="MinC_C"/>
    <property type="match status" value="1"/>
</dbReference>
<dbReference type="Pfam" id="PF05209">
    <property type="entry name" value="MinC_N"/>
    <property type="match status" value="1"/>
</dbReference>
<dbReference type="SUPFAM" id="SSF63848">
    <property type="entry name" value="Cell-division inhibitor MinC, C-terminal domain"/>
    <property type="match status" value="1"/>
</dbReference>
<feature type="chain" id="PRO_1000047880" description="Probable septum site-determining protein MinC">
    <location>
        <begin position="1"/>
        <end position="228"/>
    </location>
</feature>
<name>MINC_YERPP</name>
<organism>
    <name type="scientific">Yersinia pestis (strain Pestoides F)</name>
    <dbReference type="NCBI Taxonomy" id="386656"/>
    <lineage>
        <taxon>Bacteria</taxon>
        <taxon>Pseudomonadati</taxon>
        <taxon>Pseudomonadota</taxon>
        <taxon>Gammaproteobacteria</taxon>
        <taxon>Enterobacterales</taxon>
        <taxon>Yersiniaceae</taxon>
        <taxon>Yersinia</taxon>
    </lineage>
</organism>
<keyword id="KW-0131">Cell cycle</keyword>
<keyword id="KW-0132">Cell division</keyword>
<keyword id="KW-0717">Septation</keyword>
<accession>A4TJI1</accession>